<sequence>MTSPIVTLKSVEQQQDLIITPPTTGLSLTGKITIPGDKSISHRALMLGAIAQGETIIKGLLLGEDPHSTAKCFRAMGAEISPLNTDKIIVKGIGLGNLQEPVDVLDAGNSGTTMRLMLGLLASHPERFFTVTGDSSLRSRPMSRVIKPLQQMGAQIWGRKQNSLAPLAISGQSLQPIHYHSPIASAQVKSCILLAGLSVEGKTTVTEPALSRDHSERMLKAFGANLEIDPQTHSVTVMGPSRLTGQTVIVPGDISSAAFWLVAGSIVPGSDLLIENVGINPTRTGILEVLEMMGADLTLLNQREITGEPVADIRVKHSQLKACTISGDIVPRLIDEIPILAVAAVFAQGTTVIRDAQELRVKESDRLAVMACELNQMGAKITELPDGLEITGPVSLKGSQVDSYTDHRIAMSLAIAALNASHSTTIHRAQAAAVSYPEFITTLQQLCQ</sequence>
<protein>
    <recommendedName>
        <fullName evidence="1">3-phosphoshikimate 1-carboxyvinyltransferase</fullName>
        <ecNumber evidence="1">2.5.1.19</ecNumber>
    </recommendedName>
    <alternativeName>
        <fullName evidence="1">5-enolpyruvylshikimate-3-phosphate synthase</fullName>
        <shortName evidence="1">EPSP synthase</shortName>
        <shortName evidence="1">EPSPS</shortName>
    </alternativeName>
</protein>
<reference key="1">
    <citation type="journal article" date="2011" name="MBio">
        <title>Novel metabolic attributes of the genus Cyanothece, comprising a group of unicellular nitrogen-fixing Cyanobacteria.</title>
        <authorList>
            <person name="Bandyopadhyay A."/>
            <person name="Elvitigala T."/>
            <person name="Welsh E."/>
            <person name="Stockel J."/>
            <person name="Liberton M."/>
            <person name="Min H."/>
            <person name="Sherman L.A."/>
            <person name="Pakrasi H.B."/>
        </authorList>
    </citation>
    <scope>NUCLEOTIDE SEQUENCE [LARGE SCALE GENOMIC DNA]</scope>
    <source>
        <strain>PCC 7424</strain>
    </source>
</reference>
<evidence type="ECO:0000255" key="1">
    <source>
        <dbReference type="HAMAP-Rule" id="MF_00210"/>
    </source>
</evidence>
<keyword id="KW-0028">Amino-acid biosynthesis</keyword>
<keyword id="KW-0057">Aromatic amino acid biosynthesis</keyword>
<keyword id="KW-0963">Cytoplasm</keyword>
<keyword id="KW-1185">Reference proteome</keyword>
<keyword id="KW-0808">Transferase</keyword>
<feature type="chain" id="PRO_1000118780" description="3-phosphoshikimate 1-carboxyvinyltransferase">
    <location>
        <begin position="1"/>
        <end position="448"/>
    </location>
</feature>
<feature type="active site" description="Proton acceptor" evidence="1">
    <location>
        <position position="335"/>
    </location>
</feature>
<feature type="binding site" evidence="1">
    <location>
        <position position="38"/>
    </location>
    <ligand>
        <name>3-phosphoshikimate</name>
        <dbReference type="ChEBI" id="CHEBI:145989"/>
    </ligand>
</feature>
<feature type="binding site" evidence="1">
    <location>
        <position position="38"/>
    </location>
    <ligand>
        <name>phosphoenolpyruvate</name>
        <dbReference type="ChEBI" id="CHEBI:58702"/>
    </ligand>
</feature>
<feature type="binding site" evidence="1">
    <location>
        <position position="39"/>
    </location>
    <ligand>
        <name>3-phosphoshikimate</name>
        <dbReference type="ChEBI" id="CHEBI:145989"/>
    </ligand>
</feature>
<feature type="binding site" evidence="1">
    <location>
        <position position="43"/>
    </location>
    <ligand>
        <name>3-phosphoshikimate</name>
        <dbReference type="ChEBI" id="CHEBI:145989"/>
    </ligand>
</feature>
<feature type="binding site" evidence="1">
    <location>
        <position position="111"/>
    </location>
    <ligand>
        <name>phosphoenolpyruvate</name>
        <dbReference type="ChEBI" id="CHEBI:58702"/>
    </ligand>
</feature>
<feature type="binding site" evidence="1">
    <location>
        <position position="140"/>
    </location>
    <ligand>
        <name>phosphoenolpyruvate</name>
        <dbReference type="ChEBI" id="CHEBI:58702"/>
    </ligand>
</feature>
<feature type="binding site" evidence="1">
    <location>
        <position position="185"/>
    </location>
    <ligand>
        <name>3-phosphoshikimate</name>
        <dbReference type="ChEBI" id="CHEBI:145989"/>
    </ligand>
</feature>
<feature type="binding site" evidence="1">
    <location>
        <position position="187"/>
    </location>
    <ligand>
        <name>3-phosphoshikimate</name>
        <dbReference type="ChEBI" id="CHEBI:145989"/>
    </ligand>
</feature>
<feature type="binding site" evidence="1">
    <location>
        <position position="187"/>
    </location>
    <ligand>
        <name>phosphoenolpyruvate</name>
        <dbReference type="ChEBI" id="CHEBI:58702"/>
    </ligand>
</feature>
<feature type="binding site" evidence="1">
    <location>
        <position position="335"/>
    </location>
    <ligand>
        <name>3-phosphoshikimate</name>
        <dbReference type="ChEBI" id="CHEBI:145989"/>
    </ligand>
</feature>
<feature type="binding site" evidence="1">
    <location>
        <position position="362"/>
    </location>
    <ligand>
        <name>3-phosphoshikimate</name>
        <dbReference type="ChEBI" id="CHEBI:145989"/>
    </ligand>
</feature>
<feature type="binding site" evidence="1">
    <location>
        <position position="366"/>
    </location>
    <ligand>
        <name>phosphoenolpyruvate</name>
        <dbReference type="ChEBI" id="CHEBI:58702"/>
    </ligand>
</feature>
<feature type="binding site" evidence="1">
    <location>
        <position position="408"/>
    </location>
    <ligand>
        <name>phosphoenolpyruvate</name>
        <dbReference type="ChEBI" id="CHEBI:58702"/>
    </ligand>
</feature>
<gene>
    <name evidence="1" type="primary">aroA</name>
    <name type="ordered locus">PCC7424_4148</name>
</gene>
<organism>
    <name type="scientific">Gloeothece citriformis (strain PCC 7424)</name>
    <name type="common">Cyanothece sp. (strain PCC 7424)</name>
    <dbReference type="NCBI Taxonomy" id="65393"/>
    <lineage>
        <taxon>Bacteria</taxon>
        <taxon>Bacillati</taxon>
        <taxon>Cyanobacteriota</taxon>
        <taxon>Cyanophyceae</taxon>
        <taxon>Oscillatoriophycideae</taxon>
        <taxon>Chroococcales</taxon>
        <taxon>Aphanothecaceae</taxon>
        <taxon>Gloeothece</taxon>
        <taxon>Gloeothece citriformis</taxon>
    </lineage>
</organism>
<name>AROA_GLOC7</name>
<proteinExistence type="inferred from homology"/>
<dbReference type="EC" id="2.5.1.19" evidence="1"/>
<dbReference type="EMBL" id="CP001291">
    <property type="protein sequence ID" value="ACK72519.1"/>
    <property type="molecule type" value="Genomic_DNA"/>
</dbReference>
<dbReference type="RefSeq" id="WP_015956104.1">
    <property type="nucleotide sequence ID" value="NC_011729.1"/>
</dbReference>
<dbReference type="SMR" id="B7KLE7"/>
<dbReference type="STRING" id="65393.PCC7424_4148"/>
<dbReference type="KEGG" id="cyc:PCC7424_4148"/>
<dbReference type="eggNOG" id="COG0128">
    <property type="taxonomic scope" value="Bacteria"/>
</dbReference>
<dbReference type="HOGENOM" id="CLU_024321_0_1_3"/>
<dbReference type="OrthoDB" id="9809920at2"/>
<dbReference type="UniPathway" id="UPA00053">
    <property type="reaction ID" value="UER00089"/>
</dbReference>
<dbReference type="Proteomes" id="UP000002384">
    <property type="component" value="Chromosome"/>
</dbReference>
<dbReference type="GO" id="GO:0005737">
    <property type="term" value="C:cytoplasm"/>
    <property type="evidence" value="ECO:0007669"/>
    <property type="project" value="UniProtKB-SubCell"/>
</dbReference>
<dbReference type="GO" id="GO:0003866">
    <property type="term" value="F:3-phosphoshikimate 1-carboxyvinyltransferase activity"/>
    <property type="evidence" value="ECO:0007669"/>
    <property type="project" value="UniProtKB-UniRule"/>
</dbReference>
<dbReference type="GO" id="GO:0008652">
    <property type="term" value="P:amino acid biosynthetic process"/>
    <property type="evidence" value="ECO:0007669"/>
    <property type="project" value="UniProtKB-KW"/>
</dbReference>
<dbReference type="GO" id="GO:0009073">
    <property type="term" value="P:aromatic amino acid family biosynthetic process"/>
    <property type="evidence" value="ECO:0007669"/>
    <property type="project" value="UniProtKB-KW"/>
</dbReference>
<dbReference type="GO" id="GO:0009423">
    <property type="term" value="P:chorismate biosynthetic process"/>
    <property type="evidence" value="ECO:0007669"/>
    <property type="project" value="UniProtKB-UniRule"/>
</dbReference>
<dbReference type="CDD" id="cd01556">
    <property type="entry name" value="EPSP_synthase"/>
    <property type="match status" value="1"/>
</dbReference>
<dbReference type="FunFam" id="3.65.10.10:FF:000005">
    <property type="entry name" value="3-phosphoshikimate 1-carboxyvinyltransferase"/>
    <property type="match status" value="1"/>
</dbReference>
<dbReference type="FunFam" id="3.65.10.10:FF:000006">
    <property type="entry name" value="3-phosphoshikimate 1-carboxyvinyltransferase"/>
    <property type="match status" value="1"/>
</dbReference>
<dbReference type="Gene3D" id="3.65.10.10">
    <property type="entry name" value="Enolpyruvate transferase domain"/>
    <property type="match status" value="2"/>
</dbReference>
<dbReference type="HAMAP" id="MF_00210">
    <property type="entry name" value="EPSP_synth"/>
    <property type="match status" value="1"/>
</dbReference>
<dbReference type="InterPro" id="IPR001986">
    <property type="entry name" value="Enolpyruvate_Tfrase_dom"/>
</dbReference>
<dbReference type="InterPro" id="IPR036968">
    <property type="entry name" value="Enolpyruvate_Tfrase_sf"/>
</dbReference>
<dbReference type="InterPro" id="IPR006264">
    <property type="entry name" value="EPSP_synthase"/>
</dbReference>
<dbReference type="InterPro" id="IPR023193">
    <property type="entry name" value="EPSP_synthase_CS"/>
</dbReference>
<dbReference type="InterPro" id="IPR013792">
    <property type="entry name" value="RNA3'P_cycl/enolpyr_Trfase_a/b"/>
</dbReference>
<dbReference type="NCBIfam" id="TIGR01356">
    <property type="entry name" value="aroA"/>
    <property type="match status" value="1"/>
</dbReference>
<dbReference type="PANTHER" id="PTHR21090">
    <property type="entry name" value="AROM/DEHYDROQUINATE SYNTHASE"/>
    <property type="match status" value="1"/>
</dbReference>
<dbReference type="PANTHER" id="PTHR21090:SF5">
    <property type="entry name" value="PENTAFUNCTIONAL AROM POLYPEPTIDE"/>
    <property type="match status" value="1"/>
</dbReference>
<dbReference type="Pfam" id="PF00275">
    <property type="entry name" value="EPSP_synthase"/>
    <property type="match status" value="1"/>
</dbReference>
<dbReference type="PIRSF" id="PIRSF000505">
    <property type="entry name" value="EPSPS"/>
    <property type="match status" value="1"/>
</dbReference>
<dbReference type="SUPFAM" id="SSF55205">
    <property type="entry name" value="EPT/RTPC-like"/>
    <property type="match status" value="1"/>
</dbReference>
<dbReference type="PROSITE" id="PS00104">
    <property type="entry name" value="EPSP_SYNTHASE_1"/>
    <property type="match status" value="1"/>
</dbReference>
<dbReference type="PROSITE" id="PS00885">
    <property type="entry name" value="EPSP_SYNTHASE_2"/>
    <property type="match status" value="1"/>
</dbReference>
<accession>B7KLE7</accession>
<comment type="function">
    <text evidence="1">Catalyzes the transfer of the enolpyruvyl moiety of phosphoenolpyruvate (PEP) to the 5-hydroxyl of shikimate-3-phosphate (S3P) to produce enolpyruvyl shikimate-3-phosphate and inorganic phosphate.</text>
</comment>
<comment type="catalytic activity">
    <reaction evidence="1">
        <text>3-phosphoshikimate + phosphoenolpyruvate = 5-O-(1-carboxyvinyl)-3-phosphoshikimate + phosphate</text>
        <dbReference type="Rhea" id="RHEA:21256"/>
        <dbReference type="ChEBI" id="CHEBI:43474"/>
        <dbReference type="ChEBI" id="CHEBI:57701"/>
        <dbReference type="ChEBI" id="CHEBI:58702"/>
        <dbReference type="ChEBI" id="CHEBI:145989"/>
        <dbReference type="EC" id="2.5.1.19"/>
    </reaction>
    <physiologicalReaction direction="left-to-right" evidence="1">
        <dbReference type="Rhea" id="RHEA:21257"/>
    </physiologicalReaction>
</comment>
<comment type="pathway">
    <text evidence="1">Metabolic intermediate biosynthesis; chorismate biosynthesis; chorismate from D-erythrose 4-phosphate and phosphoenolpyruvate: step 6/7.</text>
</comment>
<comment type="subunit">
    <text evidence="1">Monomer.</text>
</comment>
<comment type="subcellular location">
    <subcellularLocation>
        <location evidence="1">Cytoplasm</location>
    </subcellularLocation>
</comment>
<comment type="similarity">
    <text evidence="1">Belongs to the EPSP synthase family.</text>
</comment>